<organism>
    <name type="scientific">Mycobacterium tuberculosis (strain ATCC 25618 / H37Rv)</name>
    <dbReference type="NCBI Taxonomy" id="83332"/>
    <lineage>
        <taxon>Bacteria</taxon>
        <taxon>Bacillati</taxon>
        <taxon>Actinomycetota</taxon>
        <taxon>Actinomycetes</taxon>
        <taxon>Mycobacteriales</taxon>
        <taxon>Mycobacteriaceae</taxon>
        <taxon>Mycobacterium</taxon>
        <taxon>Mycobacterium tuberculosis complex</taxon>
    </lineage>
</organism>
<accession>O50411</accession>
<accession>L0TFG4</accession>
<dbReference type="EC" id="3.1.-.-" evidence="1"/>
<dbReference type="EMBL" id="AL123456">
    <property type="protein sequence ID" value="CCP46205.1"/>
    <property type="molecule type" value="Genomic_DNA"/>
</dbReference>
<dbReference type="PIR" id="G70973">
    <property type="entry name" value="G70973"/>
</dbReference>
<dbReference type="RefSeq" id="NP_217901.1">
    <property type="nucleotide sequence ID" value="NC_000962.3"/>
</dbReference>
<dbReference type="RefSeq" id="WP_003417916.1">
    <property type="nucleotide sequence ID" value="NZ_NVQJ01000021.1"/>
</dbReference>
<dbReference type="SMR" id="O50411"/>
<dbReference type="STRING" id="83332.Rv3384c"/>
<dbReference type="PaxDb" id="83332-Rv3384c"/>
<dbReference type="DNASU" id="887432"/>
<dbReference type="GeneID" id="887432"/>
<dbReference type="KEGG" id="mtu:Rv3384c"/>
<dbReference type="KEGG" id="mtv:RVBD_3384c"/>
<dbReference type="TubercuList" id="Rv3384c"/>
<dbReference type="eggNOG" id="COG1848">
    <property type="taxonomic scope" value="Bacteria"/>
</dbReference>
<dbReference type="InParanoid" id="O50411"/>
<dbReference type="OrthoDB" id="4750219at2"/>
<dbReference type="PhylomeDB" id="O50411"/>
<dbReference type="Proteomes" id="UP000001584">
    <property type="component" value="Chromosome"/>
</dbReference>
<dbReference type="GO" id="GO:0005886">
    <property type="term" value="C:plasma membrane"/>
    <property type="evidence" value="ECO:0007005"/>
    <property type="project" value="MTBBASE"/>
</dbReference>
<dbReference type="GO" id="GO:0000287">
    <property type="term" value="F:magnesium ion binding"/>
    <property type="evidence" value="ECO:0007669"/>
    <property type="project" value="UniProtKB-UniRule"/>
</dbReference>
<dbReference type="GO" id="GO:0004540">
    <property type="term" value="F:RNA nuclease activity"/>
    <property type="evidence" value="ECO:0007669"/>
    <property type="project" value="InterPro"/>
</dbReference>
<dbReference type="GO" id="GO:0045926">
    <property type="term" value="P:negative regulation of growth"/>
    <property type="evidence" value="ECO:0000315"/>
    <property type="project" value="MTBBASE"/>
</dbReference>
<dbReference type="CDD" id="cd09874">
    <property type="entry name" value="PIN_MT3492-like"/>
    <property type="match status" value="1"/>
</dbReference>
<dbReference type="FunFam" id="3.40.50.1010:FF:000076">
    <property type="entry name" value="Ribonuclease VapC"/>
    <property type="match status" value="1"/>
</dbReference>
<dbReference type="Gene3D" id="3.40.50.1010">
    <property type="entry name" value="5'-nuclease"/>
    <property type="match status" value="1"/>
</dbReference>
<dbReference type="HAMAP" id="MF_00265">
    <property type="entry name" value="VapC_Nob1"/>
    <property type="match status" value="1"/>
</dbReference>
<dbReference type="InterPro" id="IPR029060">
    <property type="entry name" value="PIN-like_dom_sf"/>
</dbReference>
<dbReference type="InterPro" id="IPR002716">
    <property type="entry name" value="PIN_dom"/>
</dbReference>
<dbReference type="InterPro" id="IPR022907">
    <property type="entry name" value="VapC_family"/>
</dbReference>
<dbReference type="Pfam" id="PF01850">
    <property type="entry name" value="PIN"/>
    <property type="match status" value="1"/>
</dbReference>
<dbReference type="SUPFAM" id="SSF88723">
    <property type="entry name" value="PIN domain-like"/>
    <property type="match status" value="1"/>
</dbReference>
<evidence type="ECO:0000255" key="1">
    <source>
        <dbReference type="HAMAP-Rule" id="MF_00265"/>
    </source>
</evidence>
<evidence type="ECO:0000269" key="2">
    <source>
    </source>
</evidence>
<comment type="function">
    <text evidence="1 2">Toxic component of a type II toxin-antitoxin (TA) system. An RNase (By similarity). Upon expression in M.smegmatis inhibits colony formation. Its toxic effect is neutralized by coexpression with cognate antitoxin VapB46.</text>
</comment>
<comment type="cofactor">
    <cofactor evidence="1">
        <name>Mg(2+)</name>
        <dbReference type="ChEBI" id="CHEBI:18420"/>
    </cofactor>
</comment>
<comment type="similarity">
    <text evidence="1">Belongs to the PINc/VapC protein family.</text>
</comment>
<name>VPC46_MYCTU</name>
<proteinExistence type="evidence at protein level"/>
<sequence length="130" mass="14317">MAAIYLDSSAIVKLAVREPESDALRRYLRTRHPRVSSALARAEVMRALLDKGESARKAGRRALAHLDLLRVDKRVLDLAGGLLPFELRTLDAIHLATAQRLGVDLGRLCTYDDRMRDAAKTLGMAVIAPS</sequence>
<reference key="1">
    <citation type="journal article" date="1998" name="Nature">
        <title>Deciphering the biology of Mycobacterium tuberculosis from the complete genome sequence.</title>
        <authorList>
            <person name="Cole S.T."/>
            <person name="Brosch R."/>
            <person name="Parkhill J."/>
            <person name="Garnier T."/>
            <person name="Churcher C.M."/>
            <person name="Harris D.E."/>
            <person name="Gordon S.V."/>
            <person name="Eiglmeier K."/>
            <person name="Gas S."/>
            <person name="Barry C.E. III"/>
            <person name="Tekaia F."/>
            <person name="Badcock K."/>
            <person name="Basham D."/>
            <person name="Brown D."/>
            <person name="Chillingworth T."/>
            <person name="Connor R."/>
            <person name="Davies R.M."/>
            <person name="Devlin K."/>
            <person name="Feltwell T."/>
            <person name="Gentles S."/>
            <person name="Hamlin N."/>
            <person name="Holroyd S."/>
            <person name="Hornsby T."/>
            <person name="Jagels K."/>
            <person name="Krogh A."/>
            <person name="McLean J."/>
            <person name="Moule S."/>
            <person name="Murphy L.D."/>
            <person name="Oliver S."/>
            <person name="Osborne J."/>
            <person name="Quail M.A."/>
            <person name="Rajandream M.A."/>
            <person name="Rogers J."/>
            <person name="Rutter S."/>
            <person name="Seeger K."/>
            <person name="Skelton S."/>
            <person name="Squares S."/>
            <person name="Squares R."/>
            <person name="Sulston J.E."/>
            <person name="Taylor K."/>
            <person name="Whitehead S."/>
            <person name="Barrell B.G."/>
        </authorList>
    </citation>
    <scope>NUCLEOTIDE SEQUENCE [LARGE SCALE GENOMIC DNA]</scope>
    <source>
        <strain>ATCC 25618 / H37Rv</strain>
    </source>
</reference>
<reference key="2">
    <citation type="journal article" date="2009" name="PLoS Genet.">
        <title>Comprehensive functional analysis of Mycobacterium tuberculosis toxin-antitoxin systems: implications for pathogenesis, stress responses, and evolution.</title>
        <authorList>
            <person name="Ramage H.R."/>
            <person name="Connolly L.E."/>
            <person name="Cox J.S."/>
        </authorList>
    </citation>
    <scope>EXPRESSION IN M.SMEGMATIS</scope>
    <scope>FUNCTION AS A TOXIN</scope>
    <source>
        <strain>ATCC 35801 / TMC 107 / Erdman</strain>
    </source>
</reference>
<reference key="3">
    <citation type="journal article" date="2011" name="Mol. Cell. Proteomics">
        <title>Proteogenomic analysis of Mycobacterium tuberculosis by high resolution mass spectrometry.</title>
        <authorList>
            <person name="Kelkar D.S."/>
            <person name="Kumar D."/>
            <person name="Kumar P."/>
            <person name="Balakrishnan L."/>
            <person name="Muthusamy B."/>
            <person name="Yadav A.K."/>
            <person name="Shrivastava P."/>
            <person name="Marimuthu A."/>
            <person name="Anand S."/>
            <person name="Sundaram H."/>
            <person name="Kingsbury R."/>
            <person name="Harsha H.C."/>
            <person name="Nair B."/>
            <person name="Prasad T.S."/>
            <person name="Chauhan D.S."/>
            <person name="Katoch K."/>
            <person name="Katoch V.M."/>
            <person name="Kumar P."/>
            <person name="Chaerkady R."/>
            <person name="Ramachandran S."/>
            <person name="Dash D."/>
            <person name="Pandey A."/>
        </authorList>
    </citation>
    <scope>IDENTIFICATION BY MASS SPECTROMETRY [LARGE SCALE ANALYSIS]</scope>
    <source>
        <strain>ATCC 25618 / H37Rv</strain>
    </source>
</reference>
<gene>
    <name evidence="1" type="primary">vapC46</name>
    <name type="ordered locus">Rv3384c</name>
</gene>
<protein>
    <recommendedName>
        <fullName evidence="1">Ribonuclease VapC46</fullName>
        <shortName evidence="1">RNase VapC46</shortName>
        <ecNumber evidence="1">3.1.-.-</ecNumber>
    </recommendedName>
    <alternativeName>
        <fullName evidence="1">Toxin VapC46</fullName>
    </alternativeName>
</protein>
<feature type="chain" id="PRO_0000407898" description="Ribonuclease VapC46">
    <location>
        <begin position="1"/>
        <end position="130"/>
    </location>
</feature>
<feature type="domain" description="PINc" evidence="1">
    <location>
        <begin position="4"/>
        <end position="118"/>
    </location>
</feature>
<feature type="binding site" evidence="1">
    <location>
        <position position="7"/>
    </location>
    <ligand>
        <name>Mg(2+)</name>
        <dbReference type="ChEBI" id="CHEBI:18420"/>
    </ligand>
</feature>
<feature type="binding site" evidence="1">
    <location>
        <position position="91"/>
    </location>
    <ligand>
        <name>Mg(2+)</name>
        <dbReference type="ChEBI" id="CHEBI:18420"/>
    </ligand>
</feature>
<keyword id="KW-0378">Hydrolase</keyword>
<keyword id="KW-0460">Magnesium</keyword>
<keyword id="KW-0479">Metal-binding</keyword>
<keyword id="KW-0540">Nuclease</keyword>
<keyword id="KW-1185">Reference proteome</keyword>
<keyword id="KW-1277">Toxin-antitoxin system</keyword>